<organism>
    <name type="scientific">Pelagibacter ubique (strain HTCC1062)</name>
    <dbReference type="NCBI Taxonomy" id="335992"/>
    <lineage>
        <taxon>Bacteria</taxon>
        <taxon>Pseudomonadati</taxon>
        <taxon>Pseudomonadota</taxon>
        <taxon>Alphaproteobacteria</taxon>
        <taxon>Candidatus Pelagibacterales</taxon>
        <taxon>Candidatus Pelagibacteraceae</taxon>
        <taxon>Candidatus Pelagibacter</taxon>
    </lineage>
</organism>
<evidence type="ECO:0000255" key="1">
    <source>
        <dbReference type="HAMAP-Rule" id="MF_00095"/>
    </source>
</evidence>
<protein>
    <recommendedName>
        <fullName evidence="1">Sugar fermentation stimulation protein homolog</fullName>
    </recommendedName>
</protein>
<reference key="1">
    <citation type="journal article" date="2005" name="Science">
        <title>Genome streamlining in a cosmopolitan oceanic bacterium.</title>
        <authorList>
            <person name="Giovannoni S.J."/>
            <person name="Tripp H.J."/>
            <person name="Givan S."/>
            <person name="Podar M."/>
            <person name="Vergin K.L."/>
            <person name="Baptista D."/>
            <person name="Bibbs L."/>
            <person name="Eads J."/>
            <person name="Richardson T.H."/>
            <person name="Noordewier M."/>
            <person name="Rappe M.S."/>
            <person name="Short J.M."/>
            <person name="Carrington J.C."/>
            <person name="Mathur E.J."/>
        </authorList>
    </citation>
    <scope>NUCLEOTIDE SEQUENCE [LARGE SCALE GENOMIC DNA]</scope>
    <source>
        <strain>HTCC1062</strain>
    </source>
</reference>
<name>SFSA_PELUB</name>
<feature type="chain" id="PRO_1000008001" description="Sugar fermentation stimulation protein homolog">
    <location>
        <begin position="1"/>
        <end position="232"/>
    </location>
</feature>
<sequence>MEFTKALIKGKLIKRYKRFFADVKIGKEIVTAHCPNTGSMKGLLDEGNMVYVSKNDDPKRKLKYTLEIIKVKKNLVGVNTHFANKIAFHGLVNNLVKEVANNDSIKAEVFFDKETRFDFLVEKNKQKIFVEVKNVTLFREEKTAEFPDAVTTRGSKHLKTLIEAVKKGYKSYLLFLVQIEGVDNFKIAKDIDKEYYENYLLAKKAGVNFLAYQCKINSKEIKIDKKIKIINA</sequence>
<keyword id="KW-1185">Reference proteome</keyword>
<dbReference type="EMBL" id="CP000084">
    <property type="protein sequence ID" value="AAZ21938.1"/>
    <property type="molecule type" value="Genomic_DNA"/>
</dbReference>
<dbReference type="RefSeq" id="WP_006996793.1">
    <property type="nucleotide sequence ID" value="NC_007205.1"/>
</dbReference>
<dbReference type="SMR" id="Q4FLK0"/>
<dbReference type="STRING" id="335992.SAR11_1135"/>
<dbReference type="GeneID" id="66295629"/>
<dbReference type="KEGG" id="pub:SAR11_1135"/>
<dbReference type="eggNOG" id="COG1489">
    <property type="taxonomic scope" value="Bacteria"/>
</dbReference>
<dbReference type="HOGENOM" id="CLU_052299_2_0_5"/>
<dbReference type="OrthoDB" id="9802365at2"/>
<dbReference type="Proteomes" id="UP000002528">
    <property type="component" value="Chromosome"/>
</dbReference>
<dbReference type="GO" id="GO:0003677">
    <property type="term" value="F:DNA binding"/>
    <property type="evidence" value="ECO:0007669"/>
    <property type="project" value="InterPro"/>
</dbReference>
<dbReference type="CDD" id="cd22359">
    <property type="entry name" value="SfsA-like_bacterial"/>
    <property type="match status" value="1"/>
</dbReference>
<dbReference type="Gene3D" id="2.40.50.580">
    <property type="match status" value="1"/>
</dbReference>
<dbReference type="Gene3D" id="3.40.1350.60">
    <property type="match status" value="1"/>
</dbReference>
<dbReference type="HAMAP" id="MF_00095">
    <property type="entry name" value="SfsA"/>
    <property type="match status" value="1"/>
</dbReference>
<dbReference type="InterPro" id="IPR005224">
    <property type="entry name" value="SfsA"/>
</dbReference>
<dbReference type="InterPro" id="IPR040452">
    <property type="entry name" value="SfsA_C"/>
</dbReference>
<dbReference type="InterPro" id="IPR041465">
    <property type="entry name" value="SfsA_N"/>
</dbReference>
<dbReference type="NCBIfam" id="TIGR00230">
    <property type="entry name" value="sfsA"/>
    <property type="match status" value="1"/>
</dbReference>
<dbReference type="PANTHER" id="PTHR30545">
    <property type="entry name" value="SUGAR FERMENTATION STIMULATION PROTEIN A"/>
    <property type="match status" value="1"/>
</dbReference>
<dbReference type="PANTHER" id="PTHR30545:SF2">
    <property type="entry name" value="SUGAR FERMENTATION STIMULATION PROTEIN A"/>
    <property type="match status" value="1"/>
</dbReference>
<dbReference type="Pfam" id="PF03749">
    <property type="entry name" value="SfsA"/>
    <property type="match status" value="1"/>
</dbReference>
<dbReference type="Pfam" id="PF17746">
    <property type="entry name" value="SfsA_N"/>
    <property type="match status" value="1"/>
</dbReference>
<gene>
    <name evidence="1" type="primary">sfsA</name>
    <name type="ordered locus">SAR11_1135</name>
</gene>
<proteinExistence type="inferred from homology"/>
<comment type="similarity">
    <text evidence="1">Belongs to the SfsA family.</text>
</comment>
<accession>Q4FLK0</accession>